<accession>Q0TKK3</accession>
<proteinExistence type="inferred from homology"/>
<comment type="function">
    <text evidence="1">ATP-dependent specificity component of the Clp protease. It directs the protease to specific substrates. Can perform chaperone functions in the absence of ClpP.</text>
</comment>
<comment type="subunit">
    <text evidence="1">Component of the ClpX-ClpP complex. Forms a hexameric ring that, in the presence of ATP, binds to fourteen ClpP subunits assembled into a disk-like structure with a central cavity, resembling the structure of eukaryotic proteasomes.</text>
</comment>
<comment type="similarity">
    <text evidence="1">Belongs to the ClpX chaperone family.</text>
</comment>
<name>CLPX_ECOL5</name>
<feature type="chain" id="PRO_1000024551" description="ATP-dependent Clp protease ATP-binding subunit ClpX">
    <location>
        <begin position="1"/>
        <end position="424"/>
    </location>
</feature>
<feature type="domain" description="ClpX-type ZB" evidence="2">
    <location>
        <begin position="2"/>
        <end position="56"/>
    </location>
</feature>
<feature type="binding site" evidence="2">
    <location>
        <position position="15"/>
    </location>
    <ligand>
        <name>Zn(2+)</name>
        <dbReference type="ChEBI" id="CHEBI:29105"/>
    </ligand>
</feature>
<feature type="binding site" evidence="2">
    <location>
        <position position="18"/>
    </location>
    <ligand>
        <name>Zn(2+)</name>
        <dbReference type="ChEBI" id="CHEBI:29105"/>
    </ligand>
</feature>
<feature type="binding site" evidence="2">
    <location>
        <position position="37"/>
    </location>
    <ligand>
        <name>Zn(2+)</name>
        <dbReference type="ChEBI" id="CHEBI:29105"/>
    </ligand>
</feature>
<feature type="binding site" evidence="2">
    <location>
        <position position="40"/>
    </location>
    <ligand>
        <name>Zn(2+)</name>
        <dbReference type="ChEBI" id="CHEBI:29105"/>
    </ligand>
</feature>
<feature type="binding site" evidence="1">
    <location>
        <begin position="120"/>
        <end position="127"/>
    </location>
    <ligand>
        <name>ATP</name>
        <dbReference type="ChEBI" id="CHEBI:30616"/>
    </ligand>
</feature>
<gene>
    <name evidence="1" type="primary">clpX</name>
    <name type="ordered locus">ECP_0499</name>
</gene>
<protein>
    <recommendedName>
        <fullName evidence="1">ATP-dependent Clp protease ATP-binding subunit ClpX</fullName>
    </recommendedName>
</protein>
<reference key="1">
    <citation type="journal article" date="2006" name="Mol. Microbiol.">
        <title>Role of pathogenicity island-associated integrases in the genome plasticity of uropathogenic Escherichia coli strain 536.</title>
        <authorList>
            <person name="Hochhut B."/>
            <person name="Wilde C."/>
            <person name="Balling G."/>
            <person name="Middendorf B."/>
            <person name="Dobrindt U."/>
            <person name="Brzuszkiewicz E."/>
            <person name="Gottschalk G."/>
            <person name="Carniel E."/>
            <person name="Hacker J."/>
        </authorList>
    </citation>
    <scope>NUCLEOTIDE SEQUENCE [LARGE SCALE GENOMIC DNA]</scope>
    <source>
        <strain>536 / UPEC</strain>
    </source>
</reference>
<organism>
    <name type="scientific">Escherichia coli O6:K15:H31 (strain 536 / UPEC)</name>
    <dbReference type="NCBI Taxonomy" id="362663"/>
    <lineage>
        <taxon>Bacteria</taxon>
        <taxon>Pseudomonadati</taxon>
        <taxon>Pseudomonadota</taxon>
        <taxon>Gammaproteobacteria</taxon>
        <taxon>Enterobacterales</taxon>
        <taxon>Enterobacteriaceae</taxon>
        <taxon>Escherichia</taxon>
    </lineage>
</organism>
<evidence type="ECO:0000255" key="1">
    <source>
        <dbReference type="HAMAP-Rule" id="MF_00175"/>
    </source>
</evidence>
<evidence type="ECO:0000255" key="2">
    <source>
        <dbReference type="PROSITE-ProRule" id="PRU01250"/>
    </source>
</evidence>
<dbReference type="EMBL" id="CP000247">
    <property type="protein sequence ID" value="ABG68528.1"/>
    <property type="molecule type" value="Genomic_DNA"/>
</dbReference>
<dbReference type="RefSeq" id="WP_000130305.1">
    <property type="nucleotide sequence ID" value="NC_008253.1"/>
</dbReference>
<dbReference type="SMR" id="Q0TKK3"/>
<dbReference type="GeneID" id="93777016"/>
<dbReference type="KEGG" id="ecp:ECP_0499"/>
<dbReference type="HOGENOM" id="CLU_014218_8_2_6"/>
<dbReference type="Proteomes" id="UP000009182">
    <property type="component" value="Chromosome"/>
</dbReference>
<dbReference type="GO" id="GO:0009376">
    <property type="term" value="C:HslUV protease complex"/>
    <property type="evidence" value="ECO:0007669"/>
    <property type="project" value="TreeGrafter"/>
</dbReference>
<dbReference type="GO" id="GO:0005524">
    <property type="term" value="F:ATP binding"/>
    <property type="evidence" value="ECO:0007669"/>
    <property type="project" value="UniProtKB-UniRule"/>
</dbReference>
<dbReference type="GO" id="GO:0016887">
    <property type="term" value="F:ATP hydrolysis activity"/>
    <property type="evidence" value="ECO:0007669"/>
    <property type="project" value="InterPro"/>
</dbReference>
<dbReference type="GO" id="GO:0140662">
    <property type="term" value="F:ATP-dependent protein folding chaperone"/>
    <property type="evidence" value="ECO:0007669"/>
    <property type="project" value="InterPro"/>
</dbReference>
<dbReference type="GO" id="GO:0046983">
    <property type="term" value="F:protein dimerization activity"/>
    <property type="evidence" value="ECO:0007669"/>
    <property type="project" value="InterPro"/>
</dbReference>
<dbReference type="GO" id="GO:0051082">
    <property type="term" value="F:unfolded protein binding"/>
    <property type="evidence" value="ECO:0007669"/>
    <property type="project" value="UniProtKB-UniRule"/>
</dbReference>
<dbReference type="GO" id="GO:0008270">
    <property type="term" value="F:zinc ion binding"/>
    <property type="evidence" value="ECO:0007669"/>
    <property type="project" value="InterPro"/>
</dbReference>
<dbReference type="GO" id="GO:0051301">
    <property type="term" value="P:cell division"/>
    <property type="evidence" value="ECO:0007669"/>
    <property type="project" value="TreeGrafter"/>
</dbReference>
<dbReference type="GO" id="GO:0051603">
    <property type="term" value="P:proteolysis involved in protein catabolic process"/>
    <property type="evidence" value="ECO:0007669"/>
    <property type="project" value="TreeGrafter"/>
</dbReference>
<dbReference type="CDD" id="cd19497">
    <property type="entry name" value="RecA-like_ClpX"/>
    <property type="match status" value="1"/>
</dbReference>
<dbReference type="FunFam" id="1.10.8.60:FF:000002">
    <property type="entry name" value="ATP-dependent Clp protease ATP-binding subunit ClpX"/>
    <property type="match status" value="1"/>
</dbReference>
<dbReference type="FunFam" id="3.40.50.300:FF:000005">
    <property type="entry name" value="ATP-dependent Clp protease ATP-binding subunit ClpX"/>
    <property type="match status" value="1"/>
</dbReference>
<dbReference type="Gene3D" id="1.10.8.60">
    <property type="match status" value="1"/>
</dbReference>
<dbReference type="Gene3D" id="6.20.220.10">
    <property type="entry name" value="ClpX chaperone, C4-type zinc finger domain"/>
    <property type="match status" value="1"/>
</dbReference>
<dbReference type="Gene3D" id="3.40.50.300">
    <property type="entry name" value="P-loop containing nucleotide triphosphate hydrolases"/>
    <property type="match status" value="1"/>
</dbReference>
<dbReference type="HAMAP" id="MF_00175">
    <property type="entry name" value="ClpX"/>
    <property type="match status" value="1"/>
</dbReference>
<dbReference type="InterPro" id="IPR003593">
    <property type="entry name" value="AAA+_ATPase"/>
</dbReference>
<dbReference type="InterPro" id="IPR050052">
    <property type="entry name" value="ATP-dep_Clp_protease_ClpX"/>
</dbReference>
<dbReference type="InterPro" id="IPR003959">
    <property type="entry name" value="ATPase_AAA_core"/>
</dbReference>
<dbReference type="InterPro" id="IPR019489">
    <property type="entry name" value="Clp_ATPase_C"/>
</dbReference>
<dbReference type="InterPro" id="IPR004487">
    <property type="entry name" value="Clp_protease_ATP-bd_su_ClpX"/>
</dbReference>
<dbReference type="InterPro" id="IPR046425">
    <property type="entry name" value="ClpX_bact"/>
</dbReference>
<dbReference type="InterPro" id="IPR027417">
    <property type="entry name" value="P-loop_NTPase"/>
</dbReference>
<dbReference type="InterPro" id="IPR010603">
    <property type="entry name" value="Znf_CppX_C4"/>
</dbReference>
<dbReference type="InterPro" id="IPR038366">
    <property type="entry name" value="Znf_CppX_C4_sf"/>
</dbReference>
<dbReference type="NCBIfam" id="TIGR00382">
    <property type="entry name" value="clpX"/>
    <property type="match status" value="1"/>
</dbReference>
<dbReference type="NCBIfam" id="NF003745">
    <property type="entry name" value="PRK05342.1"/>
    <property type="match status" value="1"/>
</dbReference>
<dbReference type="PANTHER" id="PTHR48102:SF7">
    <property type="entry name" value="ATP-DEPENDENT CLP PROTEASE ATP-BINDING SUBUNIT CLPX-LIKE, MITOCHONDRIAL"/>
    <property type="match status" value="1"/>
</dbReference>
<dbReference type="PANTHER" id="PTHR48102">
    <property type="entry name" value="ATP-DEPENDENT CLP PROTEASE ATP-BINDING SUBUNIT CLPX-LIKE, MITOCHONDRIAL-RELATED"/>
    <property type="match status" value="1"/>
</dbReference>
<dbReference type="Pfam" id="PF07724">
    <property type="entry name" value="AAA_2"/>
    <property type="match status" value="1"/>
</dbReference>
<dbReference type="Pfam" id="PF10431">
    <property type="entry name" value="ClpB_D2-small"/>
    <property type="match status" value="1"/>
</dbReference>
<dbReference type="Pfam" id="PF06689">
    <property type="entry name" value="zf-C4_ClpX"/>
    <property type="match status" value="1"/>
</dbReference>
<dbReference type="SMART" id="SM00382">
    <property type="entry name" value="AAA"/>
    <property type="match status" value="1"/>
</dbReference>
<dbReference type="SMART" id="SM01086">
    <property type="entry name" value="ClpB_D2-small"/>
    <property type="match status" value="1"/>
</dbReference>
<dbReference type="SMART" id="SM00994">
    <property type="entry name" value="zf-C4_ClpX"/>
    <property type="match status" value="1"/>
</dbReference>
<dbReference type="SUPFAM" id="SSF57716">
    <property type="entry name" value="Glucocorticoid receptor-like (DNA-binding domain)"/>
    <property type="match status" value="1"/>
</dbReference>
<dbReference type="SUPFAM" id="SSF52540">
    <property type="entry name" value="P-loop containing nucleoside triphosphate hydrolases"/>
    <property type="match status" value="1"/>
</dbReference>
<dbReference type="PROSITE" id="PS51902">
    <property type="entry name" value="CLPX_ZB"/>
    <property type="match status" value="1"/>
</dbReference>
<sequence length="424" mass="46356">MTDKRKDGSGKLLYCSFCGKSQHEVRKLIAGPSVYICDECVDLCNDIIREEIKEVAPHRERSALPTPHEIRNHLDDYVIGQEQAKKVLAVAVYNHYKRLRNGDTSNGVELGKSNILLIGPTGSGKTLLAETLARLLDVPFTMADATTLTEAGYVGEDVENIIQKLLQKCDYDVQKAQRGIVYIDEIDKISRKSDNPSITRDVSGEGVQQALLKLIEGTVAAVPPQGGRKHPQQEFLQVDTSKILFICGGAFAGLDKVISHRVETGSGIGFGATVKAKSDKASEGELLAQVEPEDLIKFGLIPEFIGRLPVVATLNELSEEALIQILKEPKNALTKQYQALFNLEGVDLEFRDEALDAIAKKAMARKTGARGLRSIVEAALLDTMYDLPSMEDVEKVVIDESVIDGQSKPLLIYGKPEAQQASGE</sequence>
<keyword id="KW-0067">ATP-binding</keyword>
<keyword id="KW-0143">Chaperone</keyword>
<keyword id="KW-0479">Metal-binding</keyword>
<keyword id="KW-0547">Nucleotide-binding</keyword>
<keyword id="KW-0862">Zinc</keyword>